<comment type="function">
    <text evidence="1">Produces ATP from ADP in the presence of a proton gradient across the membrane. The catalytic sites are hosted primarily by the beta subunits.</text>
</comment>
<comment type="catalytic activity">
    <reaction evidence="1">
        <text>ATP + H2O + 4 H(+)(in) = ADP + phosphate + 5 H(+)(out)</text>
        <dbReference type="Rhea" id="RHEA:57720"/>
        <dbReference type="ChEBI" id="CHEBI:15377"/>
        <dbReference type="ChEBI" id="CHEBI:15378"/>
        <dbReference type="ChEBI" id="CHEBI:30616"/>
        <dbReference type="ChEBI" id="CHEBI:43474"/>
        <dbReference type="ChEBI" id="CHEBI:456216"/>
        <dbReference type="EC" id="7.1.2.2"/>
    </reaction>
</comment>
<comment type="subunit">
    <text evidence="1">F-type ATPases have 2 components, CF(1) - the catalytic core - and CF(0) - the membrane proton channel. CF(1) has five subunits: alpha(3), beta(3), gamma(1), delta(1), epsilon(1). CF(0) has three main subunits: a(1), b(2) and c(9-12). The alpha and beta chains form an alternating ring which encloses part of the gamma chain. CF(1) is attached to CF(0) by a central stalk formed by the gamma and epsilon chains, while a peripheral stalk is formed by the delta and b chains.</text>
</comment>
<comment type="subcellular location">
    <subcellularLocation>
        <location evidence="1">Cell inner membrane</location>
        <topology evidence="1">Peripheral membrane protein</topology>
    </subcellularLocation>
</comment>
<comment type="similarity">
    <text evidence="1">Belongs to the ATPase alpha/beta chains family.</text>
</comment>
<evidence type="ECO:0000255" key="1">
    <source>
        <dbReference type="HAMAP-Rule" id="MF_01347"/>
    </source>
</evidence>
<sequence length="465" mass="50423">MSQGKIVQIIGAVVDVEFPRDMIPRVYDALKLDENGLTLEVQQLLGDGVVRTIAMGSSDGLKRGMTVSNTGSPITVPVGKGTLGRIVDVLGTPVDEAGPIDTDKSRAIHQAAPKFDELSSTTELLETGIKVIDLLCPFAKGGKVGLFGGAGVGKTVNMMELINNIAKAHSGLSVFSGVGERTREGNDFYHEMKDSNVLDKVAMVYGQMNEPPGNRLRVALTGLTMAEYFRDEKDENGKGRDVLFFVDNIYRYTLAGTEVSALLGRMPSAVGYQPTLAEEMGRLQERITSTQTGSITSIQAVYVPADDLTDPSPATTFAHLDATVVLSRDIASLGIYPAVDPLDSTSRQLDPMVLGQEHYDVARGVQSTLQKYKELRDIIAILGMDELSDEDKLAVMRARKIQRFLSQPFHVAEVFTGSPGKYVALRDTIAGFKAILNGEYDHLPEQAFYMVGSIEEAVEKAKTLN</sequence>
<gene>
    <name evidence="1" type="primary">atpD</name>
    <name type="ordered locus">NGO_2150</name>
</gene>
<name>ATPB_NEIG1</name>
<dbReference type="EC" id="7.1.2.2" evidence="1"/>
<dbReference type="EMBL" id="AE004969">
    <property type="protein sequence ID" value="AAW90747.1"/>
    <property type="molecule type" value="Genomic_DNA"/>
</dbReference>
<dbReference type="RefSeq" id="WP_003690451.1">
    <property type="nucleotide sequence ID" value="NC_002946.2"/>
</dbReference>
<dbReference type="RefSeq" id="YP_209159.1">
    <property type="nucleotide sequence ID" value="NC_002946.2"/>
</dbReference>
<dbReference type="SMR" id="Q5F4Z0"/>
<dbReference type="STRING" id="242231.NGO_2150"/>
<dbReference type="GeneID" id="66754479"/>
<dbReference type="KEGG" id="ngo:NGO_2150"/>
<dbReference type="PATRIC" id="fig|242231.10.peg.2599"/>
<dbReference type="HOGENOM" id="CLU_022398_0_2_4"/>
<dbReference type="Proteomes" id="UP000000535">
    <property type="component" value="Chromosome"/>
</dbReference>
<dbReference type="GO" id="GO:0005886">
    <property type="term" value="C:plasma membrane"/>
    <property type="evidence" value="ECO:0007669"/>
    <property type="project" value="UniProtKB-SubCell"/>
</dbReference>
<dbReference type="GO" id="GO:0045259">
    <property type="term" value="C:proton-transporting ATP synthase complex"/>
    <property type="evidence" value="ECO:0007669"/>
    <property type="project" value="UniProtKB-KW"/>
</dbReference>
<dbReference type="GO" id="GO:0005524">
    <property type="term" value="F:ATP binding"/>
    <property type="evidence" value="ECO:0007669"/>
    <property type="project" value="UniProtKB-UniRule"/>
</dbReference>
<dbReference type="GO" id="GO:0016887">
    <property type="term" value="F:ATP hydrolysis activity"/>
    <property type="evidence" value="ECO:0007669"/>
    <property type="project" value="InterPro"/>
</dbReference>
<dbReference type="GO" id="GO:0046933">
    <property type="term" value="F:proton-transporting ATP synthase activity, rotational mechanism"/>
    <property type="evidence" value="ECO:0007669"/>
    <property type="project" value="UniProtKB-UniRule"/>
</dbReference>
<dbReference type="CDD" id="cd18110">
    <property type="entry name" value="ATP-synt_F1_beta_C"/>
    <property type="match status" value="1"/>
</dbReference>
<dbReference type="CDD" id="cd18115">
    <property type="entry name" value="ATP-synt_F1_beta_N"/>
    <property type="match status" value="1"/>
</dbReference>
<dbReference type="CDD" id="cd01133">
    <property type="entry name" value="F1-ATPase_beta_CD"/>
    <property type="match status" value="1"/>
</dbReference>
<dbReference type="FunFam" id="1.10.1140.10:FF:000001">
    <property type="entry name" value="ATP synthase subunit beta"/>
    <property type="match status" value="1"/>
</dbReference>
<dbReference type="FunFam" id="2.40.10.170:FF:000003">
    <property type="entry name" value="ATP synthase subunit beta"/>
    <property type="match status" value="1"/>
</dbReference>
<dbReference type="FunFam" id="3.40.50.300:FF:000004">
    <property type="entry name" value="ATP synthase subunit beta"/>
    <property type="match status" value="1"/>
</dbReference>
<dbReference type="Gene3D" id="2.40.10.170">
    <property type="match status" value="1"/>
</dbReference>
<dbReference type="Gene3D" id="1.10.1140.10">
    <property type="entry name" value="Bovine Mitochondrial F1-atpase, Atp Synthase Beta Chain, Chain D, domain 3"/>
    <property type="match status" value="1"/>
</dbReference>
<dbReference type="Gene3D" id="3.40.50.300">
    <property type="entry name" value="P-loop containing nucleotide triphosphate hydrolases"/>
    <property type="match status" value="1"/>
</dbReference>
<dbReference type="HAMAP" id="MF_01347">
    <property type="entry name" value="ATP_synth_beta_bact"/>
    <property type="match status" value="1"/>
</dbReference>
<dbReference type="InterPro" id="IPR003593">
    <property type="entry name" value="AAA+_ATPase"/>
</dbReference>
<dbReference type="InterPro" id="IPR055190">
    <property type="entry name" value="ATP-synt_VA_C"/>
</dbReference>
<dbReference type="InterPro" id="IPR005722">
    <property type="entry name" value="ATP_synth_F1_bsu"/>
</dbReference>
<dbReference type="InterPro" id="IPR020003">
    <property type="entry name" value="ATPase_a/bsu_AS"/>
</dbReference>
<dbReference type="InterPro" id="IPR050053">
    <property type="entry name" value="ATPase_alpha/beta_chains"/>
</dbReference>
<dbReference type="InterPro" id="IPR004100">
    <property type="entry name" value="ATPase_F1/V1/A1_a/bsu_N"/>
</dbReference>
<dbReference type="InterPro" id="IPR036121">
    <property type="entry name" value="ATPase_F1/V1/A1_a/bsu_N_sf"/>
</dbReference>
<dbReference type="InterPro" id="IPR000194">
    <property type="entry name" value="ATPase_F1/V1/A1_a/bsu_nucl-bd"/>
</dbReference>
<dbReference type="InterPro" id="IPR024034">
    <property type="entry name" value="ATPase_F1/V1_b/a_C"/>
</dbReference>
<dbReference type="InterPro" id="IPR027417">
    <property type="entry name" value="P-loop_NTPase"/>
</dbReference>
<dbReference type="NCBIfam" id="TIGR01039">
    <property type="entry name" value="atpD"/>
    <property type="match status" value="1"/>
</dbReference>
<dbReference type="PANTHER" id="PTHR15184">
    <property type="entry name" value="ATP SYNTHASE"/>
    <property type="match status" value="1"/>
</dbReference>
<dbReference type="PANTHER" id="PTHR15184:SF71">
    <property type="entry name" value="ATP SYNTHASE SUBUNIT BETA, MITOCHONDRIAL"/>
    <property type="match status" value="1"/>
</dbReference>
<dbReference type="Pfam" id="PF00006">
    <property type="entry name" value="ATP-synt_ab"/>
    <property type="match status" value="1"/>
</dbReference>
<dbReference type="Pfam" id="PF02874">
    <property type="entry name" value="ATP-synt_ab_N"/>
    <property type="match status" value="1"/>
</dbReference>
<dbReference type="Pfam" id="PF22919">
    <property type="entry name" value="ATP-synt_VA_C"/>
    <property type="match status" value="1"/>
</dbReference>
<dbReference type="SMART" id="SM00382">
    <property type="entry name" value="AAA"/>
    <property type="match status" value="1"/>
</dbReference>
<dbReference type="SUPFAM" id="SSF47917">
    <property type="entry name" value="C-terminal domain of alpha and beta subunits of F1 ATP synthase"/>
    <property type="match status" value="1"/>
</dbReference>
<dbReference type="SUPFAM" id="SSF50615">
    <property type="entry name" value="N-terminal domain of alpha and beta subunits of F1 ATP synthase"/>
    <property type="match status" value="1"/>
</dbReference>
<dbReference type="SUPFAM" id="SSF52540">
    <property type="entry name" value="P-loop containing nucleoside triphosphate hydrolases"/>
    <property type="match status" value="1"/>
</dbReference>
<dbReference type="PROSITE" id="PS00152">
    <property type="entry name" value="ATPASE_ALPHA_BETA"/>
    <property type="match status" value="1"/>
</dbReference>
<reference key="1">
    <citation type="submission" date="2003-03" db="EMBL/GenBank/DDBJ databases">
        <title>The complete genome sequence of Neisseria gonorrhoeae.</title>
        <authorList>
            <person name="Lewis L.A."/>
            <person name="Gillaspy A.F."/>
            <person name="McLaughlin R.E."/>
            <person name="Gipson M."/>
            <person name="Ducey T.F."/>
            <person name="Ownbey T."/>
            <person name="Hartman K."/>
            <person name="Nydick C."/>
            <person name="Carson M.B."/>
            <person name="Vaughn J."/>
            <person name="Thomson C."/>
            <person name="Song L."/>
            <person name="Lin S."/>
            <person name="Yuan X."/>
            <person name="Najar F."/>
            <person name="Zhan M."/>
            <person name="Ren Q."/>
            <person name="Zhu H."/>
            <person name="Qi S."/>
            <person name="Kenton S.M."/>
            <person name="Lai H."/>
            <person name="White J.D."/>
            <person name="Clifton S."/>
            <person name="Roe B.A."/>
            <person name="Dyer D.W."/>
        </authorList>
    </citation>
    <scope>NUCLEOTIDE SEQUENCE [LARGE SCALE GENOMIC DNA]</scope>
    <source>
        <strain>ATCC 700825 / FA 1090</strain>
    </source>
</reference>
<accession>Q5F4Z0</accession>
<protein>
    <recommendedName>
        <fullName evidence="1">ATP synthase subunit beta</fullName>
        <ecNumber evidence="1">7.1.2.2</ecNumber>
    </recommendedName>
    <alternativeName>
        <fullName evidence="1">ATP synthase F1 sector subunit beta</fullName>
    </alternativeName>
    <alternativeName>
        <fullName evidence="1">F-ATPase subunit beta</fullName>
    </alternativeName>
</protein>
<keyword id="KW-0066">ATP synthesis</keyword>
<keyword id="KW-0067">ATP-binding</keyword>
<keyword id="KW-0997">Cell inner membrane</keyword>
<keyword id="KW-1003">Cell membrane</keyword>
<keyword id="KW-0139">CF(1)</keyword>
<keyword id="KW-0375">Hydrogen ion transport</keyword>
<keyword id="KW-0406">Ion transport</keyword>
<keyword id="KW-0472">Membrane</keyword>
<keyword id="KW-0547">Nucleotide-binding</keyword>
<keyword id="KW-1185">Reference proteome</keyword>
<keyword id="KW-1278">Translocase</keyword>
<keyword id="KW-0813">Transport</keyword>
<organism>
    <name type="scientific">Neisseria gonorrhoeae (strain ATCC 700825 / FA 1090)</name>
    <dbReference type="NCBI Taxonomy" id="242231"/>
    <lineage>
        <taxon>Bacteria</taxon>
        <taxon>Pseudomonadati</taxon>
        <taxon>Pseudomonadota</taxon>
        <taxon>Betaproteobacteria</taxon>
        <taxon>Neisseriales</taxon>
        <taxon>Neisseriaceae</taxon>
        <taxon>Neisseria</taxon>
    </lineage>
</organism>
<proteinExistence type="inferred from homology"/>
<feature type="chain" id="PRO_0000254311" description="ATP synthase subunit beta">
    <location>
        <begin position="1"/>
        <end position="465"/>
    </location>
</feature>
<feature type="binding site" evidence="1">
    <location>
        <begin position="148"/>
        <end position="155"/>
    </location>
    <ligand>
        <name>ATP</name>
        <dbReference type="ChEBI" id="CHEBI:30616"/>
    </ligand>
</feature>